<comment type="function">
    <text evidence="1">Component of the acetyl coenzyme A carboxylase (ACC) complex. First, biotin carboxylase catalyzes the carboxylation of biotin on its carrier protein (BCCP) and then the CO(2) group is transferred by the carboxyltransferase to acetyl-CoA to form malonyl-CoA.</text>
</comment>
<comment type="catalytic activity">
    <reaction evidence="1">
        <text>N(6)-carboxybiotinyl-L-lysyl-[protein] + acetyl-CoA = N(6)-biotinyl-L-lysyl-[protein] + malonyl-CoA</text>
        <dbReference type="Rhea" id="RHEA:54728"/>
        <dbReference type="Rhea" id="RHEA-COMP:10505"/>
        <dbReference type="Rhea" id="RHEA-COMP:10506"/>
        <dbReference type="ChEBI" id="CHEBI:57288"/>
        <dbReference type="ChEBI" id="CHEBI:57384"/>
        <dbReference type="ChEBI" id="CHEBI:83144"/>
        <dbReference type="ChEBI" id="CHEBI:83145"/>
        <dbReference type="EC" id="2.1.3.15"/>
    </reaction>
</comment>
<comment type="pathway">
    <text evidence="1">Lipid metabolism; malonyl-CoA biosynthesis; malonyl-CoA from acetyl-CoA: step 1/1.</text>
</comment>
<comment type="subunit">
    <text evidence="1">Acetyl-CoA carboxylase is a heterohexamer composed of biotin carboxyl carrier protein (AccB), biotin carboxylase (AccC) and two subunits each of ACCase subunit alpha (AccA) and ACCase subunit beta (AccD).</text>
</comment>
<comment type="subcellular location">
    <subcellularLocation>
        <location evidence="1">Cytoplasm</location>
    </subcellularLocation>
</comment>
<comment type="similarity">
    <text evidence="1">Belongs to the AccA family.</text>
</comment>
<evidence type="ECO:0000255" key="1">
    <source>
        <dbReference type="HAMAP-Rule" id="MF_00823"/>
    </source>
</evidence>
<evidence type="ECO:0000255" key="2">
    <source>
        <dbReference type="PROSITE-ProRule" id="PRU01137"/>
    </source>
</evidence>
<dbReference type="EC" id="2.1.3.15" evidence="1"/>
<dbReference type="EMBL" id="CP000046">
    <property type="protein sequence ID" value="AAW36850.1"/>
    <property type="molecule type" value="Genomic_DNA"/>
</dbReference>
<dbReference type="RefSeq" id="WP_000883645.1">
    <property type="nucleotide sequence ID" value="NZ_JBGOFO010000008.1"/>
</dbReference>
<dbReference type="SMR" id="Q5HF74"/>
<dbReference type="KEGG" id="sac:SACOL1747"/>
<dbReference type="HOGENOM" id="CLU_015486_0_2_9"/>
<dbReference type="UniPathway" id="UPA00655">
    <property type="reaction ID" value="UER00711"/>
</dbReference>
<dbReference type="Proteomes" id="UP000000530">
    <property type="component" value="Chromosome"/>
</dbReference>
<dbReference type="GO" id="GO:0009317">
    <property type="term" value="C:acetyl-CoA carboxylase complex"/>
    <property type="evidence" value="ECO:0007669"/>
    <property type="project" value="InterPro"/>
</dbReference>
<dbReference type="GO" id="GO:0003989">
    <property type="term" value="F:acetyl-CoA carboxylase activity"/>
    <property type="evidence" value="ECO:0007669"/>
    <property type="project" value="InterPro"/>
</dbReference>
<dbReference type="GO" id="GO:0005524">
    <property type="term" value="F:ATP binding"/>
    <property type="evidence" value="ECO:0007669"/>
    <property type="project" value="UniProtKB-KW"/>
</dbReference>
<dbReference type="GO" id="GO:0016743">
    <property type="term" value="F:carboxyl- or carbamoyltransferase activity"/>
    <property type="evidence" value="ECO:0007669"/>
    <property type="project" value="UniProtKB-UniRule"/>
</dbReference>
<dbReference type="GO" id="GO:0006633">
    <property type="term" value="P:fatty acid biosynthetic process"/>
    <property type="evidence" value="ECO:0007669"/>
    <property type="project" value="UniProtKB-KW"/>
</dbReference>
<dbReference type="GO" id="GO:2001295">
    <property type="term" value="P:malonyl-CoA biosynthetic process"/>
    <property type="evidence" value="ECO:0007669"/>
    <property type="project" value="UniProtKB-UniRule"/>
</dbReference>
<dbReference type="Gene3D" id="3.90.226.10">
    <property type="entry name" value="2-enoyl-CoA Hydratase, Chain A, domain 1"/>
    <property type="match status" value="1"/>
</dbReference>
<dbReference type="HAMAP" id="MF_00823">
    <property type="entry name" value="AcetylCoA_CT_alpha"/>
    <property type="match status" value="1"/>
</dbReference>
<dbReference type="InterPro" id="IPR001095">
    <property type="entry name" value="Acetyl_CoA_COase_a_su"/>
</dbReference>
<dbReference type="InterPro" id="IPR029045">
    <property type="entry name" value="ClpP/crotonase-like_dom_sf"/>
</dbReference>
<dbReference type="InterPro" id="IPR011763">
    <property type="entry name" value="COA_CT_C"/>
</dbReference>
<dbReference type="NCBIfam" id="TIGR00513">
    <property type="entry name" value="accA"/>
    <property type="match status" value="1"/>
</dbReference>
<dbReference type="NCBIfam" id="NF041504">
    <property type="entry name" value="AccA_sub"/>
    <property type="match status" value="1"/>
</dbReference>
<dbReference type="NCBIfam" id="NF004344">
    <property type="entry name" value="PRK05724.1"/>
    <property type="match status" value="1"/>
</dbReference>
<dbReference type="PANTHER" id="PTHR42853">
    <property type="entry name" value="ACETYL-COENZYME A CARBOXYLASE CARBOXYL TRANSFERASE SUBUNIT ALPHA"/>
    <property type="match status" value="1"/>
</dbReference>
<dbReference type="PANTHER" id="PTHR42853:SF3">
    <property type="entry name" value="ACETYL-COENZYME A CARBOXYLASE CARBOXYL TRANSFERASE SUBUNIT ALPHA, CHLOROPLASTIC"/>
    <property type="match status" value="1"/>
</dbReference>
<dbReference type="Pfam" id="PF03255">
    <property type="entry name" value="ACCA"/>
    <property type="match status" value="1"/>
</dbReference>
<dbReference type="PRINTS" id="PR01069">
    <property type="entry name" value="ACCCTRFRASEA"/>
</dbReference>
<dbReference type="SUPFAM" id="SSF52096">
    <property type="entry name" value="ClpP/crotonase"/>
    <property type="match status" value="1"/>
</dbReference>
<dbReference type="PROSITE" id="PS50989">
    <property type="entry name" value="COA_CT_CTER"/>
    <property type="match status" value="1"/>
</dbReference>
<accession>Q5HF74</accession>
<feature type="chain" id="PRO_0000223826" description="Acetyl-coenzyme A carboxylase carboxyl transferase subunit alpha">
    <location>
        <begin position="1"/>
        <end position="314"/>
    </location>
</feature>
<feature type="domain" description="CoA carboxyltransferase C-terminal" evidence="2">
    <location>
        <begin position="32"/>
        <end position="289"/>
    </location>
</feature>
<name>ACCA_STAAC</name>
<organism>
    <name type="scientific">Staphylococcus aureus (strain COL)</name>
    <dbReference type="NCBI Taxonomy" id="93062"/>
    <lineage>
        <taxon>Bacteria</taxon>
        <taxon>Bacillati</taxon>
        <taxon>Bacillota</taxon>
        <taxon>Bacilli</taxon>
        <taxon>Bacillales</taxon>
        <taxon>Staphylococcaceae</taxon>
        <taxon>Staphylococcus</taxon>
    </lineage>
</organism>
<keyword id="KW-0067">ATP-binding</keyword>
<keyword id="KW-0963">Cytoplasm</keyword>
<keyword id="KW-0275">Fatty acid biosynthesis</keyword>
<keyword id="KW-0276">Fatty acid metabolism</keyword>
<keyword id="KW-0444">Lipid biosynthesis</keyword>
<keyword id="KW-0443">Lipid metabolism</keyword>
<keyword id="KW-0547">Nucleotide-binding</keyword>
<keyword id="KW-0808">Transferase</keyword>
<reference key="1">
    <citation type="journal article" date="2005" name="J. Bacteriol.">
        <title>Insights on evolution of virulence and resistance from the complete genome analysis of an early methicillin-resistant Staphylococcus aureus strain and a biofilm-producing methicillin-resistant Staphylococcus epidermidis strain.</title>
        <authorList>
            <person name="Gill S.R."/>
            <person name="Fouts D.E."/>
            <person name="Archer G.L."/>
            <person name="Mongodin E.F."/>
            <person name="DeBoy R.T."/>
            <person name="Ravel J."/>
            <person name="Paulsen I.T."/>
            <person name="Kolonay J.F."/>
            <person name="Brinkac L.M."/>
            <person name="Beanan M.J."/>
            <person name="Dodson R.J."/>
            <person name="Daugherty S.C."/>
            <person name="Madupu R."/>
            <person name="Angiuoli S.V."/>
            <person name="Durkin A.S."/>
            <person name="Haft D.H."/>
            <person name="Vamathevan J.J."/>
            <person name="Khouri H."/>
            <person name="Utterback T.R."/>
            <person name="Lee C."/>
            <person name="Dimitrov G."/>
            <person name="Jiang L."/>
            <person name="Qin H."/>
            <person name="Weidman J."/>
            <person name="Tran K."/>
            <person name="Kang K.H."/>
            <person name="Hance I.R."/>
            <person name="Nelson K.E."/>
            <person name="Fraser C.M."/>
        </authorList>
    </citation>
    <scope>NUCLEOTIDE SEQUENCE [LARGE SCALE GENOMIC DNA]</scope>
    <source>
        <strain>COL</strain>
    </source>
</reference>
<proteinExistence type="inferred from homology"/>
<sequence length="314" mass="35070">MLDFEKPLFEIRNKIESLKESQDKNDVDLQEEIDMLEASLERETKKIYTNLKPWDRVQIARLQERPTTLDYIPYIFDSFMELHGDRNFRDDPAMIGGIGFLNGRAVTVIGQQRGKDTKDNIYRNFGMAHPEGYRKALRLMKQAEKFNRPIFTFIDTKGAYPGKAAEERGQSESIATNLIEMASLKVPVIAIVIGEGGSGGALGIGIANKVLMLENSTYSVISPEGAAALLWKDSNLAKIAAETMKITAHDIKQLGIIDDVISEPLGGAHKDIEQQALAIKSAFVAQLDSLESLSRDEIANDRFEKFRNIGSYIE</sequence>
<protein>
    <recommendedName>
        <fullName evidence="1">Acetyl-coenzyme A carboxylase carboxyl transferase subunit alpha</fullName>
        <shortName evidence="1">ACCase subunit alpha</shortName>
        <shortName evidence="1">Acetyl-CoA carboxylase carboxyltransferase subunit alpha</shortName>
        <ecNumber evidence="1">2.1.3.15</ecNumber>
    </recommendedName>
</protein>
<gene>
    <name evidence="1" type="primary">accA</name>
    <name type="ordered locus">SACOL1747</name>
</gene>